<gene>
    <name type="primary">HBA</name>
</gene>
<protein>
    <recommendedName>
        <fullName>Hemoglobin subunit alpha</fullName>
    </recommendedName>
    <alternativeName>
        <fullName>Alpha-globin</fullName>
    </alternativeName>
    <alternativeName>
        <fullName>Hemoglobin alpha chain</fullName>
    </alternativeName>
    <component>
        <recommendedName>
            <fullName evidence="2">Hemopressin</fullName>
        </recommendedName>
    </component>
</protein>
<accession>P07425</accession>
<keyword id="KW-0007">Acetylation</keyword>
<keyword id="KW-0903">Direct protein sequencing</keyword>
<keyword id="KW-0349">Heme</keyword>
<keyword id="KW-0408">Iron</keyword>
<keyword id="KW-0479">Metal-binding</keyword>
<keyword id="KW-0561">Oxygen transport</keyword>
<keyword id="KW-0597">Phosphoprotein</keyword>
<keyword id="KW-0813">Transport</keyword>
<sequence length="141" mass="15142">VLSSKDKANVKTAFGKIGGHAADYGAEALERMFLGFPTTKTYFPHFDLSHGSAQVKAHGKKVGDALTKAADHLDDLPSALSALSDLHAHKLRVDPVNFKLLSHCLLVTVAAHHPGDFTPAVHASLDKFLTNVSTVLTSKYR</sequence>
<name>HBA_LAMVI</name>
<evidence type="ECO:0000250" key="1">
    <source>
        <dbReference type="UniProtKB" id="P01942"/>
    </source>
</evidence>
<evidence type="ECO:0000250" key="2">
    <source>
        <dbReference type="UniProtKB" id="P01946"/>
    </source>
</evidence>
<evidence type="ECO:0000250" key="3">
    <source>
        <dbReference type="UniProtKB" id="P69905"/>
    </source>
</evidence>
<evidence type="ECO:0000255" key="4">
    <source>
        <dbReference type="PROSITE-ProRule" id="PRU00238"/>
    </source>
</evidence>
<comment type="function">
    <text>Involved in oxygen transport from the lung to the various peripheral tissues.</text>
</comment>
<comment type="function">
    <molecule>Hemopressin</molecule>
    <text evidence="2">Hemopressin acts as an antagonist peptide of the cannabinoid receptor CNR1. Hemopressin-binding efficiently blocks cannabinoid receptor CNR1 and subsequent signaling.</text>
</comment>
<comment type="subunit">
    <text>Heterotetramer of two alpha chains and two beta chains.</text>
</comment>
<comment type="tissue specificity">
    <text>Red blood cells.</text>
</comment>
<comment type="similarity">
    <text evidence="4">Belongs to the globin family.</text>
</comment>
<dbReference type="PIR" id="A25478">
    <property type="entry name" value="A25478"/>
</dbReference>
<dbReference type="SMR" id="P07425"/>
<dbReference type="GO" id="GO:0072562">
    <property type="term" value="C:blood microparticle"/>
    <property type="evidence" value="ECO:0007669"/>
    <property type="project" value="TreeGrafter"/>
</dbReference>
<dbReference type="GO" id="GO:0031838">
    <property type="term" value="C:haptoglobin-hemoglobin complex"/>
    <property type="evidence" value="ECO:0007669"/>
    <property type="project" value="TreeGrafter"/>
</dbReference>
<dbReference type="GO" id="GO:0005833">
    <property type="term" value="C:hemoglobin complex"/>
    <property type="evidence" value="ECO:0007669"/>
    <property type="project" value="InterPro"/>
</dbReference>
<dbReference type="GO" id="GO:0031720">
    <property type="term" value="F:haptoglobin binding"/>
    <property type="evidence" value="ECO:0007669"/>
    <property type="project" value="TreeGrafter"/>
</dbReference>
<dbReference type="GO" id="GO:0020037">
    <property type="term" value="F:heme binding"/>
    <property type="evidence" value="ECO:0007669"/>
    <property type="project" value="InterPro"/>
</dbReference>
<dbReference type="GO" id="GO:0005506">
    <property type="term" value="F:iron ion binding"/>
    <property type="evidence" value="ECO:0007669"/>
    <property type="project" value="InterPro"/>
</dbReference>
<dbReference type="GO" id="GO:0043177">
    <property type="term" value="F:organic acid binding"/>
    <property type="evidence" value="ECO:0007669"/>
    <property type="project" value="TreeGrafter"/>
</dbReference>
<dbReference type="GO" id="GO:0019825">
    <property type="term" value="F:oxygen binding"/>
    <property type="evidence" value="ECO:0007669"/>
    <property type="project" value="InterPro"/>
</dbReference>
<dbReference type="GO" id="GO:0005344">
    <property type="term" value="F:oxygen carrier activity"/>
    <property type="evidence" value="ECO:0007669"/>
    <property type="project" value="UniProtKB-KW"/>
</dbReference>
<dbReference type="GO" id="GO:0004601">
    <property type="term" value="F:peroxidase activity"/>
    <property type="evidence" value="ECO:0007669"/>
    <property type="project" value="TreeGrafter"/>
</dbReference>
<dbReference type="GO" id="GO:0042744">
    <property type="term" value="P:hydrogen peroxide catabolic process"/>
    <property type="evidence" value="ECO:0007669"/>
    <property type="project" value="TreeGrafter"/>
</dbReference>
<dbReference type="CDD" id="cd08927">
    <property type="entry name" value="Hb-alpha-like"/>
    <property type="match status" value="1"/>
</dbReference>
<dbReference type="FunFam" id="1.10.490.10:FF:000002">
    <property type="entry name" value="Hemoglobin subunit alpha"/>
    <property type="match status" value="1"/>
</dbReference>
<dbReference type="Gene3D" id="1.10.490.10">
    <property type="entry name" value="Globins"/>
    <property type="match status" value="1"/>
</dbReference>
<dbReference type="InterPro" id="IPR000971">
    <property type="entry name" value="Globin"/>
</dbReference>
<dbReference type="InterPro" id="IPR009050">
    <property type="entry name" value="Globin-like_sf"/>
</dbReference>
<dbReference type="InterPro" id="IPR012292">
    <property type="entry name" value="Globin/Proto"/>
</dbReference>
<dbReference type="InterPro" id="IPR002338">
    <property type="entry name" value="Hemoglobin_a-typ"/>
</dbReference>
<dbReference type="InterPro" id="IPR050056">
    <property type="entry name" value="Hemoglobin_oxygen_transport"/>
</dbReference>
<dbReference type="InterPro" id="IPR002339">
    <property type="entry name" value="Hemoglobin_pi"/>
</dbReference>
<dbReference type="PANTHER" id="PTHR11442">
    <property type="entry name" value="HEMOGLOBIN FAMILY MEMBER"/>
    <property type="match status" value="1"/>
</dbReference>
<dbReference type="PANTHER" id="PTHR11442:SF48">
    <property type="entry name" value="HEMOGLOBIN SUBUNIT ALPHA"/>
    <property type="match status" value="1"/>
</dbReference>
<dbReference type="Pfam" id="PF00042">
    <property type="entry name" value="Globin"/>
    <property type="match status" value="1"/>
</dbReference>
<dbReference type="PRINTS" id="PR00612">
    <property type="entry name" value="ALPHAHAEM"/>
</dbReference>
<dbReference type="PRINTS" id="PR00815">
    <property type="entry name" value="PIHAEM"/>
</dbReference>
<dbReference type="SUPFAM" id="SSF46458">
    <property type="entry name" value="Globin-like"/>
    <property type="match status" value="1"/>
</dbReference>
<dbReference type="PROSITE" id="PS01033">
    <property type="entry name" value="GLOBIN"/>
    <property type="match status" value="1"/>
</dbReference>
<proteinExistence type="evidence at protein level"/>
<feature type="chain" id="PRO_0000052660" description="Hemoglobin subunit alpha">
    <location>
        <begin position="1"/>
        <end position="141"/>
    </location>
</feature>
<feature type="peptide" id="PRO_0000455888" description="Hemopressin" evidence="2">
    <location>
        <begin position="95"/>
        <end position="103"/>
    </location>
</feature>
<feature type="domain" description="Globin" evidence="4">
    <location>
        <begin position="1"/>
        <end position="141"/>
    </location>
</feature>
<feature type="binding site" evidence="4">
    <location>
        <position position="58"/>
    </location>
    <ligand>
        <name>O2</name>
        <dbReference type="ChEBI" id="CHEBI:15379"/>
    </ligand>
</feature>
<feature type="binding site" description="proximal binding residue" evidence="4">
    <location>
        <position position="87"/>
    </location>
    <ligand>
        <name>heme b</name>
        <dbReference type="ChEBI" id="CHEBI:60344"/>
    </ligand>
    <ligandPart>
        <name>Fe</name>
        <dbReference type="ChEBI" id="CHEBI:18248"/>
    </ligandPart>
</feature>
<feature type="modified residue" description="Phosphoserine" evidence="3">
    <location>
        <position position="3"/>
    </location>
</feature>
<feature type="modified residue" description="N6-succinyllysine" evidence="1">
    <location>
        <position position="7"/>
    </location>
</feature>
<feature type="modified residue" description="N6-succinyllysine" evidence="1">
    <location>
        <position position="11"/>
    </location>
</feature>
<feature type="modified residue" description="N6-acetyllysine; alternate" evidence="3">
    <location>
        <position position="16"/>
    </location>
</feature>
<feature type="modified residue" description="N6-succinyllysine; alternate" evidence="1">
    <location>
        <position position="16"/>
    </location>
</feature>
<feature type="modified residue" description="Phosphotyrosine" evidence="3">
    <location>
        <position position="24"/>
    </location>
</feature>
<feature type="modified residue" description="N6-succinyllysine" evidence="1">
    <location>
        <position position="40"/>
    </location>
</feature>
<feature type="modified residue" description="Phosphoserine" evidence="3">
    <location>
        <position position="49"/>
    </location>
</feature>
<feature type="modified residue" description="Phosphoserine" evidence="1">
    <location>
        <position position="102"/>
    </location>
</feature>
<feature type="modified residue" description="Phosphothreonine" evidence="1">
    <location>
        <position position="108"/>
    </location>
</feature>
<feature type="modified residue" description="Phosphoserine" evidence="1">
    <location>
        <position position="124"/>
    </location>
</feature>
<feature type="modified residue" description="Phosphothreonine" evidence="1">
    <location>
        <position position="134"/>
    </location>
</feature>
<feature type="modified residue" description="Phosphothreonine" evidence="1">
    <location>
        <position position="137"/>
    </location>
</feature>
<feature type="modified residue" description="Phosphoserine" evidence="1">
    <location>
        <position position="138"/>
    </location>
</feature>
<organism>
    <name type="scientific">Lama vicugna</name>
    <name type="common">Vicugna</name>
    <name type="synonym">Vicugna vicugna</name>
    <dbReference type="NCBI Taxonomy" id="9843"/>
    <lineage>
        <taxon>Eukaryota</taxon>
        <taxon>Metazoa</taxon>
        <taxon>Chordata</taxon>
        <taxon>Craniata</taxon>
        <taxon>Vertebrata</taxon>
        <taxon>Euteleostomi</taxon>
        <taxon>Mammalia</taxon>
        <taxon>Eutheria</taxon>
        <taxon>Laurasiatheria</taxon>
        <taxon>Artiodactyla</taxon>
        <taxon>Tylopoda</taxon>
        <taxon>Camelidae</taxon>
        <taxon>Vicugna</taxon>
    </lineage>
</organism>
<reference key="1">
    <citation type="journal article" date="1986" name="Biol. Chem. Hoppe-Seyler">
        <title>Interaction of allosteric effectors with alpha-globin chains and high altitude respiration of mammals. The primary structure of two tylopoda hemoglobins with high oxygen affinity: vicuna (Lama vicugna) and alpaca (Lama pacos).</title>
        <authorList>
            <person name="Kleinschmidt T."/>
            <person name="Marz J."/>
            <person name="Jurgens K.D."/>
            <person name="Braunitzer G."/>
        </authorList>
    </citation>
    <scope>PROTEIN SEQUENCE</scope>
</reference>